<evidence type="ECO:0000250" key="1"/>
<evidence type="ECO:0000255" key="2"/>
<evidence type="ECO:0000255" key="3">
    <source>
        <dbReference type="PROSITE-ProRule" id="PRU00076"/>
    </source>
</evidence>
<evidence type="ECO:0000255" key="4">
    <source>
        <dbReference type="PROSITE-ProRule" id="PRU00122"/>
    </source>
</evidence>
<evidence type="ECO:0000256" key="5">
    <source>
        <dbReference type="SAM" id="MobiDB-lite"/>
    </source>
</evidence>
<evidence type="ECO:0000269" key="6">
    <source>
    </source>
</evidence>
<evidence type="ECO:0000303" key="7">
    <source>
    </source>
</evidence>
<evidence type="ECO:0000305" key="8"/>
<dbReference type="EMBL" id="DQ641432">
    <property type="protein sequence ID" value="ABG25169.1"/>
    <property type="molecule type" value="mRNA"/>
</dbReference>
<dbReference type="EMBL" id="DQ641433">
    <property type="protein sequence ID" value="ABG25170.1"/>
    <property type="molecule type" value="mRNA"/>
</dbReference>
<dbReference type="RefSeq" id="NP_001073478.1">
    <property type="nucleotide sequence ID" value="NM_001080009.1"/>
</dbReference>
<dbReference type="SMR" id="A1XQX8"/>
<dbReference type="FunCoup" id="A1XQX8">
    <property type="interactions" value="846"/>
</dbReference>
<dbReference type="PaxDb" id="7955-ENSDARP00000082612"/>
<dbReference type="PeptideAtlas" id="A1XQX8"/>
<dbReference type="AGR" id="ZFIN:ZDB-GENE-070206-9"/>
<dbReference type="ZFIN" id="ZDB-GENE-070206-9">
    <property type="gene designation" value="nrxn3a"/>
</dbReference>
<dbReference type="eggNOG" id="KOG3514">
    <property type="taxonomic scope" value="Eukaryota"/>
</dbReference>
<dbReference type="InParanoid" id="A1XQX8"/>
<dbReference type="OrthoDB" id="5989513at2759"/>
<dbReference type="PhylomeDB" id="A1XQX8"/>
<dbReference type="Reactome" id="R-DRE-6794361">
    <property type="pathway name" value="Neurexins and neuroligins"/>
</dbReference>
<dbReference type="Proteomes" id="UP000000437">
    <property type="component" value="Chromosome 17"/>
</dbReference>
<dbReference type="GO" id="GO:0016020">
    <property type="term" value="C:membrane"/>
    <property type="evidence" value="ECO:0007669"/>
    <property type="project" value="UniProtKB-SubCell"/>
</dbReference>
<dbReference type="GO" id="GO:0046872">
    <property type="term" value="F:metal ion binding"/>
    <property type="evidence" value="ECO:0007669"/>
    <property type="project" value="UniProtKB-KW"/>
</dbReference>
<dbReference type="GO" id="GO:0001525">
    <property type="term" value="P:angiogenesis"/>
    <property type="evidence" value="ECO:0007669"/>
    <property type="project" value="UniProtKB-KW"/>
</dbReference>
<dbReference type="GO" id="GO:0007155">
    <property type="term" value="P:cell adhesion"/>
    <property type="evidence" value="ECO:0007669"/>
    <property type="project" value="UniProtKB-KW"/>
</dbReference>
<dbReference type="CDD" id="cd00054">
    <property type="entry name" value="EGF_CA"/>
    <property type="match status" value="2"/>
</dbReference>
<dbReference type="CDD" id="cd00110">
    <property type="entry name" value="LamG"/>
    <property type="match status" value="6"/>
</dbReference>
<dbReference type="FunFam" id="2.10.25.10:FF:000015">
    <property type="entry name" value="neurexin-1 isoform X1"/>
    <property type="match status" value="1"/>
</dbReference>
<dbReference type="FunFam" id="2.10.25.10:FF:000029">
    <property type="entry name" value="neurexin-1 isoform X1"/>
    <property type="match status" value="1"/>
</dbReference>
<dbReference type="FunFam" id="2.60.120.200:FF:000001">
    <property type="entry name" value="neurexin-1 isoform X1"/>
    <property type="match status" value="1"/>
</dbReference>
<dbReference type="FunFam" id="2.60.120.200:FF:000003">
    <property type="entry name" value="neurexin-1 isoform X1"/>
    <property type="match status" value="1"/>
</dbReference>
<dbReference type="FunFam" id="2.60.120.200:FF:000004">
    <property type="entry name" value="neurexin-1 isoform X1"/>
    <property type="match status" value="1"/>
</dbReference>
<dbReference type="FunFam" id="2.60.120.200:FF:000005">
    <property type="entry name" value="neurexin-1 isoform X1"/>
    <property type="match status" value="1"/>
</dbReference>
<dbReference type="FunFam" id="2.60.120.200:FF:000007">
    <property type="entry name" value="neurexin-1 isoform X1"/>
    <property type="match status" value="1"/>
</dbReference>
<dbReference type="Gene3D" id="2.60.120.200">
    <property type="match status" value="6"/>
</dbReference>
<dbReference type="Gene3D" id="2.10.25.10">
    <property type="entry name" value="Laminin"/>
    <property type="match status" value="3"/>
</dbReference>
<dbReference type="InterPro" id="IPR013320">
    <property type="entry name" value="ConA-like_dom_sf"/>
</dbReference>
<dbReference type="InterPro" id="IPR000742">
    <property type="entry name" value="EGF-like_dom"/>
</dbReference>
<dbReference type="InterPro" id="IPR001791">
    <property type="entry name" value="Laminin_G"/>
</dbReference>
<dbReference type="InterPro" id="IPR003585">
    <property type="entry name" value="Neurexin-like"/>
</dbReference>
<dbReference type="InterPro" id="IPR050372">
    <property type="entry name" value="Neurexin-related_CASP"/>
</dbReference>
<dbReference type="InterPro" id="IPR027789">
    <property type="entry name" value="Syndecan/Neurexin_dom"/>
</dbReference>
<dbReference type="PANTHER" id="PTHR15036:SF49">
    <property type="entry name" value="AXOTACTIN"/>
    <property type="match status" value="1"/>
</dbReference>
<dbReference type="PANTHER" id="PTHR15036">
    <property type="entry name" value="PIKACHURIN-LIKE PROTEIN"/>
    <property type="match status" value="1"/>
</dbReference>
<dbReference type="Pfam" id="PF02210">
    <property type="entry name" value="Laminin_G_2"/>
    <property type="match status" value="6"/>
</dbReference>
<dbReference type="Pfam" id="PF01034">
    <property type="entry name" value="Syndecan"/>
    <property type="match status" value="1"/>
</dbReference>
<dbReference type="SMART" id="SM00294">
    <property type="entry name" value="4.1m"/>
    <property type="match status" value="1"/>
</dbReference>
<dbReference type="SMART" id="SM00181">
    <property type="entry name" value="EGF"/>
    <property type="match status" value="3"/>
</dbReference>
<dbReference type="SMART" id="SM00282">
    <property type="entry name" value="LamG"/>
    <property type="match status" value="6"/>
</dbReference>
<dbReference type="SUPFAM" id="SSF49899">
    <property type="entry name" value="Concanavalin A-like lectins/glucanases"/>
    <property type="match status" value="6"/>
</dbReference>
<dbReference type="PROSITE" id="PS50026">
    <property type="entry name" value="EGF_3"/>
    <property type="match status" value="3"/>
</dbReference>
<dbReference type="PROSITE" id="PS50025">
    <property type="entry name" value="LAM_G_DOMAIN"/>
    <property type="match status" value="6"/>
</dbReference>
<comment type="function">
    <text>Neuronal cell surface protein that may be involved in cell recognition and cell adhesion.</text>
</comment>
<comment type="subcellular location">
    <subcellularLocation>
        <location evidence="8">Membrane</location>
        <topology evidence="8">Single-pass type I membrane protein</topology>
    </subcellularLocation>
</comment>
<comment type="alternative products">
    <event type="alternative promoter"/>
    <event type="alternative splicing"/>
    <isoform>
        <id>A1XQX8-1</id>
        <name>1a</name>
        <sequence type="displayed"/>
    </isoform>
    <isoform>
        <id>A1XQX8-2</id>
        <name>2a</name>
        <name>Soluble form</name>
        <sequence type="described" ref="VSP_041706 VSP_041707"/>
    </isoform>
    <isoform>
        <id>A1XQY0-1</id>
        <name>1b</name>
        <sequence type="external"/>
    </isoform>
    <text>A number of isoforms, alpha-type and beta-type are produced by alternative promoter usage. Beta-type isoforms differ from alpha-type isoforms in their N-terminus.</text>
</comment>
<comment type="developmental stage">
    <text evidence="6">After the very early developmental stages, the expression levels decrease and remain relatively constant until around 24 h, with the onset of an increase of expression that continues till the larval stages.</text>
</comment>
<comment type="miscellaneous">
    <molecule>Isoform 2a</molecule>
    <text evidence="8">Produced by alternative splicing.</text>
</comment>
<comment type="similarity">
    <text evidence="8">Belongs to the neurexin family.</text>
</comment>
<proteinExistence type="evidence at transcript level"/>
<feature type="signal peptide" evidence="2">
    <location>
        <begin position="1"/>
        <end position="23"/>
    </location>
</feature>
<feature type="chain" id="PRO_0000412549" description="Neurexin-3a">
    <location>
        <begin position="24"/>
        <end position="1697"/>
    </location>
</feature>
<feature type="topological domain" description="Extracellular" evidence="2">
    <location>
        <begin position="24"/>
        <end position="1622"/>
    </location>
</feature>
<feature type="transmembrane region" description="Helical" evidence="2">
    <location>
        <begin position="1623"/>
        <end position="1643"/>
    </location>
</feature>
<feature type="topological domain" description="Cytoplasmic" evidence="2">
    <location>
        <begin position="1644"/>
        <end position="1697"/>
    </location>
</feature>
<feature type="domain" description="Laminin G-like 1" evidence="4">
    <location>
        <begin position="24"/>
        <end position="198"/>
    </location>
</feature>
<feature type="domain" description="EGF-like 1" evidence="3">
    <location>
        <begin position="194"/>
        <end position="231"/>
    </location>
</feature>
<feature type="domain" description="Laminin G-like 2" evidence="4">
    <location>
        <begin position="258"/>
        <end position="455"/>
    </location>
</feature>
<feature type="domain" description="Laminin G-like 3" evidence="4">
    <location>
        <begin position="462"/>
        <end position="654"/>
    </location>
</feature>
<feature type="domain" description="EGF-like 2" evidence="3">
    <location>
        <begin position="658"/>
        <end position="695"/>
    </location>
</feature>
<feature type="domain" description="Laminin G-like 4" evidence="4">
    <location>
        <begin position="700"/>
        <end position="872"/>
    </location>
</feature>
<feature type="domain" description="Laminin G-like 5" evidence="4">
    <location>
        <begin position="886"/>
        <end position="1061"/>
    </location>
</feature>
<feature type="domain" description="EGF-like 3" evidence="3">
    <location>
        <begin position="1073"/>
        <end position="1110"/>
    </location>
</feature>
<feature type="domain" description="Laminin G-like 6" evidence="4">
    <location>
        <begin position="1114"/>
        <end position="1314"/>
    </location>
</feature>
<feature type="region of interest" description="Disordered" evidence="5">
    <location>
        <begin position="1345"/>
        <end position="1366"/>
    </location>
</feature>
<feature type="region of interest" description="Disordered" evidence="5">
    <location>
        <begin position="1442"/>
        <end position="1479"/>
    </location>
</feature>
<feature type="region of interest" description="Disordered" evidence="5">
    <location>
        <begin position="1520"/>
        <end position="1557"/>
    </location>
</feature>
<feature type="region of interest" description="Disordered" evidence="5">
    <location>
        <begin position="1665"/>
        <end position="1697"/>
    </location>
</feature>
<feature type="compositionally biased region" description="Acidic residues" evidence="5">
    <location>
        <begin position="1446"/>
        <end position="1461"/>
    </location>
</feature>
<feature type="compositionally biased region" description="Polar residues" evidence="5">
    <location>
        <begin position="1527"/>
        <end position="1547"/>
    </location>
</feature>
<feature type="binding site" evidence="1">
    <location>
        <position position="304"/>
    </location>
    <ligand>
        <name>Ca(2+)</name>
        <dbReference type="ChEBI" id="CHEBI:29108"/>
    </ligand>
</feature>
<feature type="binding site" evidence="1">
    <location>
        <position position="321"/>
    </location>
    <ligand>
        <name>Ca(2+)</name>
        <dbReference type="ChEBI" id="CHEBI:29108"/>
    </ligand>
</feature>
<feature type="binding site" evidence="1">
    <location>
        <position position="389"/>
    </location>
    <ligand>
        <name>Ca(2+)</name>
        <dbReference type="ChEBI" id="CHEBI:29108"/>
    </ligand>
</feature>
<feature type="disulfide bond" evidence="1">
    <location>
        <begin position="198"/>
        <end position="209"/>
    </location>
</feature>
<feature type="disulfide bond" evidence="1">
    <location>
        <begin position="203"/>
        <end position="218"/>
    </location>
</feature>
<feature type="disulfide bond" evidence="1">
    <location>
        <begin position="220"/>
        <end position="230"/>
    </location>
</feature>
<feature type="disulfide bond" evidence="1">
    <location>
        <begin position="419"/>
        <end position="455"/>
    </location>
</feature>
<feature type="disulfide bond" evidence="1">
    <location>
        <begin position="625"/>
        <end position="654"/>
    </location>
</feature>
<feature type="disulfide bond" evidence="1">
    <location>
        <begin position="662"/>
        <end position="673"/>
    </location>
</feature>
<feature type="disulfide bond" evidence="1">
    <location>
        <begin position="667"/>
        <end position="682"/>
    </location>
</feature>
<feature type="disulfide bond" evidence="1">
    <location>
        <begin position="684"/>
        <end position="694"/>
    </location>
</feature>
<feature type="disulfide bond" evidence="1">
    <location>
        <begin position="1033"/>
        <end position="1061"/>
    </location>
</feature>
<feature type="disulfide bond" evidence="1">
    <location>
        <begin position="1077"/>
        <end position="1088"/>
    </location>
</feature>
<feature type="disulfide bond" evidence="1">
    <location>
        <begin position="1082"/>
        <end position="1097"/>
    </location>
</feature>
<feature type="disulfide bond" evidence="1">
    <location>
        <begin position="1099"/>
        <end position="1109"/>
    </location>
</feature>
<feature type="splice variant" id="VSP_041706" description="In isoform 2a." evidence="7">
    <original>GGELVFPVIVKDPLELPSVATRTPSIPFPPTLTIIE</original>
    <variation>AKNVNAARPLRTAYTWTWQLTYTITPIIVISYVVCS</variation>
    <location>
        <begin position="1390"/>
        <end position="1425"/>
    </location>
</feature>
<feature type="splice variant" id="VSP_041707" description="In isoform 2a." evidence="7">
    <location>
        <begin position="1426"/>
        <end position="1697"/>
    </location>
</feature>
<name>NR3AA_DANRE</name>
<accession>A1XQX8</accession>
<accession>A1XQX9</accession>
<reference key="1">
    <citation type="journal article" date="2007" name="Mol. Biol. Evol.">
        <title>Comparative genome analysis of the neurexin gene family in Danio rerio: insights into their functions and evolution.</title>
        <authorList>
            <person name="Rissone A."/>
            <person name="Monopoli M."/>
            <person name="Beltrame M."/>
            <person name="Bussolino F."/>
            <person name="Cotelli F."/>
            <person name="Arese M."/>
        </authorList>
    </citation>
    <scope>NUCLEOTIDE SEQUENCE [MRNA] (ISOFORMS 1A AND 2A)</scope>
    <scope>DEVELOPMENTAL STAGE</scope>
    <scope>ALTERNATIVE SPLICING</scope>
</reference>
<sequence length="1697" mass="187194">MNFFRFPVQLQLLISTVLGPCLGLEFTGLQGQWARYLRWDASTRSDLSFQFKTDVSTALILYFDDGGFCDFLQLMVVEGKLQLQFSIDCAETTVVSDKRVNDSSWHSATLSRYNLRTVLGLDGVSKWAEVRPLRQYMKIVSDLFLGGVPQDIRISVLTLPTVKDLPPFKGIIRELKYNSKEPILLSSQRVRMDIEGICMENPCENGGTCSVVDGEPLCDCSKTEYVGRFCNEEANNIPGFAHMMMADQAKGKAREENVATFRGSEFFCYDLSQNPIQSSSDEITLSFKTWQRNGLILHTGKSADYVNLALKDGAVSLVINLGSGAFEAIVEPVNGKFNDNSWHDVKVTRNLRQHSGIGHAMVNKLHCLVTISVDGILTTTGYTQEDYTMLGSDDFFYVGGSPSTADLPGSPVSNNFMGCLKEVVYKNNDIRLELSRLARIVDPKMKIQGDVVFKCENVATLDPISFETPEAYISLPKWNTKRMGSISFDFRTTEPNGLILFTHGKPQERKDARSQKNTKVDFFAVELLDGSLYLLLDMGSGTIKVKATQNKVNDGAWYHVDIQRDGRSGTISVNSRRTPFTASGENEILDLEGDMYLGGLPDSRGSLILPTELWTAMLNYGYVGCIRDLFIDGRSKDIRQIAEAQNGAGIKPSCNKMSGKQCDSYPCKNKGLCKEGWNRFICDCTGTGYWSRTCEREASILSYDGSMYMKVVMPTVMHTEAEDVSLRFMSQRAYGLLMATTSRDSADTLRLELDGSRVKLTVNLDCIRINCNSSKGPETLYAGQKLNDNEWHTVRVIRRGKSYKLTVDDDVAEGQMVGDHTRLEFHNIETGVMTERRFVSMIPSSFIGHLQSLKFNGLLYIDLCKNGDIDFCELNARFGMRSIIADPVTFKSKNSYLSLATLQAYTSMHLFFQFKTTSADGFILFNSGDGSDFIAVELVKGYIHYVFNLGNGPNVIKGNSERALHDNQWHNVVITRDNSNVHTLKVDAKAVSQVVNGAKNLDLKGDLFIAGLGPNMYNNLPKLVASREGFKGCLASVDLNGRLPDLINDALFRSGQIERGCEVGFTKADLKGPSTTCQEDSCANMGICIQQWENYTCDCSMTSYTGTHCNDPGTTYIFGKGGGLISFNWPANERPSTRTDRLTVGFSTSLKDGILIRIDSAPGLGDYLMLHIEQGKIGVTFNIGTADITVQESSTAVNDGKYHVVRFTRNGGNATLQVDNWAINEHFPSGNSDNERIQMANKKIPFKYARPVEEWLQEKGRQLTIFNTQATITIGGSDRKRPFQGQLSGLYYNGLKVLNMAAQGNPNIKINGSVRLVGEVPAAGSARTTALPPEMSTAFIETTTTMSTTTTRKHRTPPTIQTTDDMVSSAECSSDDEDFAECEGHAGGLGGELVFPVIVKDPLELPSVATRTPSIPFPPTLTIIETTKESLSMATEAGVPCLSDGGSDDCGDDDDDDDDDGLMISGYGSGEAYDSNLPPTDDEDFYTTFSLVTDKTLSSSTFEGGYKAHAPKWGSKDFRPNKVFDSGRTTTASFSPKLSRSTTTSTPPKLPAGKMNHRELKPQPDIVLLPLPTSYEVDNTKMKSPLITSPMFRNVPTAIPTEPGIRRVPGASEVVRESSSTTGMVVGIVAAAALCILILLYAMYKYRNRDEGSYQVDETRNYITNSAQSNGAVMKDKQQSTKSGNKKQKNKDKEYYV</sequence>
<keyword id="KW-0877">Alternative promoter usage</keyword>
<keyword id="KW-0025">Alternative splicing</keyword>
<keyword id="KW-0037">Angiogenesis</keyword>
<keyword id="KW-0106">Calcium</keyword>
<keyword id="KW-0130">Cell adhesion</keyword>
<keyword id="KW-1015">Disulfide bond</keyword>
<keyword id="KW-0245">EGF-like domain</keyword>
<keyword id="KW-0472">Membrane</keyword>
<keyword id="KW-0479">Metal-binding</keyword>
<keyword id="KW-1185">Reference proteome</keyword>
<keyword id="KW-0677">Repeat</keyword>
<keyword id="KW-0732">Signal</keyword>
<keyword id="KW-0812">Transmembrane</keyword>
<keyword id="KW-1133">Transmembrane helix</keyword>
<organism>
    <name type="scientific">Danio rerio</name>
    <name type="common">Zebrafish</name>
    <name type="synonym">Brachydanio rerio</name>
    <dbReference type="NCBI Taxonomy" id="7955"/>
    <lineage>
        <taxon>Eukaryota</taxon>
        <taxon>Metazoa</taxon>
        <taxon>Chordata</taxon>
        <taxon>Craniata</taxon>
        <taxon>Vertebrata</taxon>
        <taxon>Euteleostomi</taxon>
        <taxon>Actinopterygii</taxon>
        <taxon>Neopterygii</taxon>
        <taxon>Teleostei</taxon>
        <taxon>Ostariophysi</taxon>
        <taxon>Cypriniformes</taxon>
        <taxon>Danionidae</taxon>
        <taxon>Danioninae</taxon>
        <taxon>Danio</taxon>
    </lineage>
</organism>
<protein>
    <recommendedName>
        <fullName>Neurexin-3a</fullName>
    </recommendedName>
    <alternativeName>
        <fullName>Neurexin IIIa-alpha</fullName>
    </alternativeName>
    <alternativeName>
        <fullName>Neurexin-3a-alpha</fullName>
    </alternativeName>
</protein>
<gene>
    <name type="primary">nrxn3a</name>
</gene>